<feature type="chain" id="PRO_1000095372" description="Arginine--tRNA ligase">
    <location>
        <begin position="1"/>
        <end position="577"/>
    </location>
</feature>
<feature type="short sequence motif" description="'HIGH' region">
    <location>
        <begin position="122"/>
        <end position="132"/>
    </location>
</feature>
<protein>
    <recommendedName>
        <fullName evidence="1">Arginine--tRNA ligase</fullName>
        <ecNumber evidence="1">6.1.1.19</ecNumber>
    </recommendedName>
    <alternativeName>
        <fullName evidence="1">Arginyl-tRNA synthetase</fullName>
        <shortName evidence="1">ArgRS</shortName>
    </alternativeName>
</protein>
<reference key="1">
    <citation type="journal article" date="2008" name="PLoS Genet.">
        <title>Complete genome sequence of the N2-fixing broad host range endophyte Klebsiella pneumoniae 342 and virulence predictions verified in mice.</title>
        <authorList>
            <person name="Fouts D.E."/>
            <person name="Tyler H.L."/>
            <person name="DeBoy R.T."/>
            <person name="Daugherty S."/>
            <person name="Ren Q."/>
            <person name="Badger J.H."/>
            <person name="Durkin A.S."/>
            <person name="Huot H."/>
            <person name="Shrivastava S."/>
            <person name="Kothari S."/>
            <person name="Dodson R.J."/>
            <person name="Mohamoud Y."/>
            <person name="Khouri H."/>
            <person name="Roesch L.F.W."/>
            <person name="Krogfelt K.A."/>
            <person name="Struve C."/>
            <person name="Triplett E.W."/>
            <person name="Methe B.A."/>
        </authorList>
    </citation>
    <scope>NUCLEOTIDE SEQUENCE [LARGE SCALE GENOMIC DNA]</scope>
    <source>
        <strain>342</strain>
    </source>
</reference>
<accession>B5XPZ2</accession>
<sequence length="577" mass="64242">MNIQALLSEKVSQALIAAGAPADCEPQVRQSAKVQFGDYQANGVMAVAKKLGMAPRQLAEQVLSHLDLNGIANKVEIAGPGFINIFLDPAFLADNVNRALQSERLGVTKPQAQTIVVDYSAPNVAKEMHVGHLRSTIIGDASVRTLEFLGHKVIRANHVGDWGTQFGMLIAYLEKQQQENAGEMALADLEGFYREAKKHYDEDEAFAERARSYVVKLQGGDQYFLQMWRKLVDITMSQNQITYDRLNVTLTRDDVMGESLYNPMLPGIVADLKAKGLAVESEGATVVFLDEYKNKEGEPMGVIIQKKDGGYLYTTTDIACAKYRYETLHADRVLYYIDSRQHQHLMQAWTIVRKAGYVPDSVPLEHHMFGMMLGKDGKPFKTRAGGTVKLADLLDEALERARRLVAEKNPDMSADELENLAKVVGIGAVKYADLSKNRTTDYVFDWDNMLAFEGNTAPYMQYAYTRVLSVFRKAGIDENAMNDAPVVIAEDREAQLAARLLQFEETLSVVAREGTPHVMCAYLYDLAGLFSGFYEHCPILSAESEETRNSRLKLALLTAKTLKLGLDTLGIETVERM</sequence>
<name>SYR_KLEP3</name>
<keyword id="KW-0030">Aminoacyl-tRNA synthetase</keyword>
<keyword id="KW-0067">ATP-binding</keyword>
<keyword id="KW-0963">Cytoplasm</keyword>
<keyword id="KW-0436">Ligase</keyword>
<keyword id="KW-0547">Nucleotide-binding</keyword>
<keyword id="KW-0648">Protein biosynthesis</keyword>
<organism>
    <name type="scientific">Klebsiella pneumoniae (strain 342)</name>
    <dbReference type="NCBI Taxonomy" id="507522"/>
    <lineage>
        <taxon>Bacteria</taxon>
        <taxon>Pseudomonadati</taxon>
        <taxon>Pseudomonadota</taxon>
        <taxon>Gammaproteobacteria</taxon>
        <taxon>Enterobacterales</taxon>
        <taxon>Enterobacteriaceae</taxon>
        <taxon>Klebsiella/Raoultella group</taxon>
        <taxon>Klebsiella</taxon>
        <taxon>Klebsiella pneumoniae complex</taxon>
    </lineage>
</organism>
<gene>
    <name evidence="1" type="primary">argS</name>
    <name type="ordered locus">KPK_1896</name>
</gene>
<dbReference type="EC" id="6.1.1.19" evidence="1"/>
<dbReference type="EMBL" id="CP000964">
    <property type="protein sequence ID" value="ACI06945.1"/>
    <property type="molecule type" value="Genomic_DNA"/>
</dbReference>
<dbReference type="SMR" id="B5XPZ2"/>
<dbReference type="KEGG" id="kpe:KPK_1896"/>
<dbReference type="HOGENOM" id="CLU_006406_5_1_6"/>
<dbReference type="Proteomes" id="UP000001734">
    <property type="component" value="Chromosome"/>
</dbReference>
<dbReference type="GO" id="GO:0005737">
    <property type="term" value="C:cytoplasm"/>
    <property type="evidence" value="ECO:0007669"/>
    <property type="project" value="UniProtKB-SubCell"/>
</dbReference>
<dbReference type="GO" id="GO:0004814">
    <property type="term" value="F:arginine-tRNA ligase activity"/>
    <property type="evidence" value="ECO:0007669"/>
    <property type="project" value="UniProtKB-UniRule"/>
</dbReference>
<dbReference type="GO" id="GO:0005524">
    <property type="term" value="F:ATP binding"/>
    <property type="evidence" value="ECO:0007669"/>
    <property type="project" value="UniProtKB-UniRule"/>
</dbReference>
<dbReference type="GO" id="GO:0006420">
    <property type="term" value="P:arginyl-tRNA aminoacylation"/>
    <property type="evidence" value="ECO:0007669"/>
    <property type="project" value="UniProtKB-UniRule"/>
</dbReference>
<dbReference type="CDD" id="cd07956">
    <property type="entry name" value="Anticodon_Ia_Arg"/>
    <property type="match status" value="1"/>
</dbReference>
<dbReference type="CDD" id="cd00671">
    <property type="entry name" value="ArgRS_core"/>
    <property type="match status" value="1"/>
</dbReference>
<dbReference type="FunFam" id="1.10.730.10:FF:000001">
    <property type="entry name" value="Arginine--tRNA ligase"/>
    <property type="match status" value="1"/>
</dbReference>
<dbReference type="FunFam" id="3.30.1360.70:FF:000001">
    <property type="entry name" value="Arginine--tRNA ligase"/>
    <property type="match status" value="1"/>
</dbReference>
<dbReference type="FunFam" id="3.40.50.620:FF:000030">
    <property type="entry name" value="Arginine--tRNA ligase"/>
    <property type="match status" value="1"/>
</dbReference>
<dbReference type="Gene3D" id="3.30.1360.70">
    <property type="entry name" value="Arginyl tRNA synthetase N-terminal domain"/>
    <property type="match status" value="1"/>
</dbReference>
<dbReference type="Gene3D" id="3.40.50.620">
    <property type="entry name" value="HUPs"/>
    <property type="match status" value="1"/>
</dbReference>
<dbReference type="Gene3D" id="1.10.730.10">
    <property type="entry name" value="Isoleucyl-tRNA Synthetase, Domain 1"/>
    <property type="match status" value="1"/>
</dbReference>
<dbReference type="HAMAP" id="MF_00123">
    <property type="entry name" value="Arg_tRNA_synth"/>
    <property type="match status" value="1"/>
</dbReference>
<dbReference type="InterPro" id="IPR001412">
    <property type="entry name" value="aa-tRNA-synth_I_CS"/>
</dbReference>
<dbReference type="InterPro" id="IPR001278">
    <property type="entry name" value="Arg-tRNA-ligase"/>
</dbReference>
<dbReference type="InterPro" id="IPR005148">
    <property type="entry name" value="Arg-tRNA-synth_N"/>
</dbReference>
<dbReference type="InterPro" id="IPR036695">
    <property type="entry name" value="Arg-tRNA-synth_N_sf"/>
</dbReference>
<dbReference type="InterPro" id="IPR035684">
    <property type="entry name" value="ArgRS_core"/>
</dbReference>
<dbReference type="InterPro" id="IPR008909">
    <property type="entry name" value="DALR_anticod-bd"/>
</dbReference>
<dbReference type="InterPro" id="IPR014729">
    <property type="entry name" value="Rossmann-like_a/b/a_fold"/>
</dbReference>
<dbReference type="InterPro" id="IPR009080">
    <property type="entry name" value="tRNAsynth_Ia_anticodon-bd"/>
</dbReference>
<dbReference type="NCBIfam" id="TIGR00456">
    <property type="entry name" value="argS"/>
    <property type="match status" value="1"/>
</dbReference>
<dbReference type="PANTHER" id="PTHR11956:SF5">
    <property type="entry name" value="ARGININE--TRNA LIGASE, CYTOPLASMIC"/>
    <property type="match status" value="1"/>
</dbReference>
<dbReference type="PANTHER" id="PTHR11956">
    <property type="entry name" value="ARGINYL-TRNA SYNTHETASE"/>
    <property type="match status" value="1"/>
</dbReference>
<dbReference type="Pfam" id="PF03485">
    <property type="entry name" value="Arg_tRNA_synt_N"/>
    <property type="match status" value="1"/>
</dbReference>
<dbReference type="Pfam" id="PF05746">
    <property type="entry name" value="DALR_1"/>
    <property type="match status" value="1"/>
</dbReference>
<dbReference type="Pfam" id="PF00750">
    <property type="entry name" value="tRNA-synt_1d"/>
    <property type="match status" value="1"/>
</dbReference>
<dbReference type="PRINTS" id="PR01038">
    <property type="entry name" value="TRNASYNTHARG"/>
</dbReference>
<dbReference type="SMART" id="SM01016">
    <property type="entry name" value="Arg_tRNA_synt_N"/>
    <property type="match status" value="1"/>
</dbReference>
<dbReference type="SMART" id="SM00836">
    <property type="entry name" value="DALR_1"/>
    <property type="match status" value="1"/>
</dbReference>
<dbReference type="SUPFAM" id="SSF47323">
    <property type="entry name" value="Anticodon-binding domain of a subclass of class I aminoacyl-tRNA synthetases"/>
    <property type="match status" value="1"/>
</dbReference>
<dbReference type="SUPFAM" id="SSF55190">
    <property type="entry name" value="Arginyl-tRNA synthetase (ArgRS), N-terminal 'additional' domain"/>
    <property type="match status" value="1"/>
</dbReference>
<dbReference type="SUPFAM" id="SSF52374">
    <property type="entry name" value="Nucleotidylyl transferase"/>
    <property type="match status" value="1"/>
</dbReference>
<dbReference type="PROSITE" id="PS00178">
    <property type="entry name" value="AA_TRNA_LIGASE_I"/>
    <property type="match status" value="1"/>
</dbReference>
<comment type="catalytic activity">
    <reaction evidence="1">
        <text>tRNA(Arg) + L-arginine + ATP = L-arginyl-tRNA(Arg) + AMP + diphosphate</text>
        <dbReference type="Rhea" id="RHEA:20301"/>
        <dbReference type="Rhea" id="RHEA-COMP:9658"/>
        <dbReference type="Rhea" id="RHEA-COMP:9673"/>
        <dbReference type="ChEBI" id="CHEBI:30616"/>
        <dbReference type="ChEBI" id="CHEBI:32682"/>
        <dbReference type="ChEBI" id="CHEBI:33019"/>
        <dbReference type="ChEBI" id="CHEBI:78442"/>
        <dbReference type="ChEBI" id="CHEBI:78513"/>
        <dbReference type="ChEBI" id="CHEBI:456215"/>
        <dbReference type="EC" id="6.1.1.19"/>
    </reaction>
</comment>
<comment type="subunit">
    <text evidence="1">Monomer.</text>
</comment>
<comment type="subcellular location">
    <subcellularLocation>
        <location evidence="1">Cytoplasm</location>
    </subcellularLocation>
</comment>
<comment type="similarity">
    <text evidence="1">Belongs to the class-I aminoacyl-tRNA synthetase family.</text>
</comment>
<evidence type="ECO:0000255" key="1">
    <source>
        <dbReference type="HAMAP-Rule" id="MF_00123"/>
    </source>
</evidence>
<proteinExistence type="inferred from homology"/>